<organism>
    <name type="scientific">Ehrlichia ruminantium (strain Gardel)</name>
    <dbReference type="NCBI Taxonomy" id="302409"/>
    <lineage>
        <taxon>Bacteria</taxon>
        <taxon>Pseudomonadati</taxon>
        <taxon>Pseudomonadota</taxon>
        <taxon>Alphaproteobacteria</taxon>
        <taxon>Rickettsiales</taxon>
        <taxon>Anaplasmataceae</taxon>
        <taxon>Ehrlichia</taxon>
    </lineage>
</organism>
<name>PDRP_EHRRG</name>
<feature type="chain" id="PRO_0000196653" description="Putative pyruvate, phosphate dikinase regulatory protein">
    <location>
        <begin position="1"/>
        <end position="273"/>
    </location>
</feature>
<feature type="binding site" evidence="1">
    <location>
        <begin position="153"/>
        <end position="160"/>
    </location>
    <ligand>
        <name>ADP</name>
        <dbReference type="ChEBI" id="CHEBI:456216"/>
    </ligand>
</feature>
<gene>
    <name type="ordered locus">ERGA_CDS_02020</name>
</gene>
<proteinExistence type="inferred from homology"/>
<sequence length="273" mass="31579">MSNPVVLNLHLISDSTCETVAAVARSALEHFKSVEVNEFVWSCINSYEQIDKIMLTIEKDKYNFIMYTMFDDDIRKYLKQKAGIHEIPCIPILSHVIREISCYLNIKKDPYINTSIGLDDEYFTRIDAINYTIAHDDGQNLWDIDQADIIILGVSRTSKSPTSIYLAYRGYRVVNIPLINSIELSVDLSKMKNKLIVGLTIDIDRLIEIRRARLVSMKNQNNYGYVDYEHVLMEIRETKRICAKNGWPIIDVTQKSVEEIAATIIQYFTKMQH</sequence>
<protein>
    <recommendedName>
        <fullName evidence="1">Putative pyruvate, phosphate dikinase regulatory protein</fullName>
        <shortName evidence="1">PPDK regulatory protein</shortName>
        <ecNumber evidence="1">2.7.11.32</ecNumber>
        <ecNumber evidence="1">2.7.4.27</ecNumber>
    </recommendedName>
</protein>
<comment type="function">
    <text evidence="1">Bifunctional serine/threonine kinase and phosphorylase involved in the regulation of the pyruvate, phosphate dikinase (PPDK) by catalyzing its phosphorylation/dephosphorylation.</text>
</comment>
<comment type="catalytic activity">
    <reaction evidence="1">
        <text>N(tele)-phospho-L-histidyl/L-threonyl-[pyruvate, phosphate dikinase] + ADP = N(tele)-phospho-L-histidyl/O-phospho-L-threonyl-[pyruvate, phosphate dikinase] + AMP + H(+)</text>
        <dbReference type="Rhea" id="RHEA:43692"/>
        <dbReference type="Rhea" id="RHEA-COMP:10650"/>
        <dbReference type="Rhea" id="RHEA-COMP:10651"/>
        <dbReference type="ChEBI" id="CHEBI:15378"/>
        <dbReference type="ChEBI" id="CHEBI:30013"/>
        <dbReference type="ChEBI" id="CHEBI:61977"/>
        <dbReference type="ChEBI" id="CHEBI:83586"/>
        <dbReference type="ChEBI" id="CHEBI:456215"/>
        <dbReference type="ChEBI" id="CHEBI:456216"/>
        <dbReference type="EC" id="2.7.11.32"/>
    </reaction>
</comment>
<comment type="catalytic activity">
    <reaction evidence="1">
        <text>N(tele)-phospho-L-histidyl/O-phospho-L-threonyl-[pyruvate, phosphate dikinase] + phosphate + H(+) = N(tele)-phospho-L-histidyl/L-threonyl-[pyruvate, phosphate dikinase] + diphosphate</text>
        <dbReference type="Rhea" id="RHEA:43696"/>
        <dbReference type="Rhea" id="RHEA-COMP:10650"/>
        <dbReference type="Rhea" id="RHEA-COMP:10651"/>
        <dbReference type="ChEBI" id="CHEBI:15378"/>
        <dbReference type="ChEBI" id="CHEBI:30013"/>
        <dbReference type="ChEBI" id="CHEBI:33019"/>
        <dbReference type="ChEBI" id="CHEBI:43474"/>
        <dbReference type="ChEBI" id="CHEBI:61977"/>
        <dbReference type="ChEBI" id="CHEBI:83586"/>
        <dbReference type="EC" id="2.7.4.27"/>
    </reaction>
</comment>
<comment type="similarity">
    <text evidence="1">Belongs to the pyruvate, phosphate/water dikinase regulatory protein family. PDRP subfamily.</text>
</comment>
<comment type="sequence caution" evidence="2">
    <conflict type="erroneous initiation">
        <sequence resource="EMBL-CDS" id="CAI27654"/>
    </conflict>
</comment>
<reference key="1">
    <citation type="journal article" date="2006" name="J. Bacteriol.">
        <title>Comparative genomic analysis of three strains of Ehrlichia ruminantium reveals an active process of genome size plasticity.</title>
        <authorList>
            <person name="Frutos R."/>
            <person name="Viari A."/>
            <person name="Ferraz C."/>
            <person name="Morgat A."/>
            <person name="Eychenie S."/>
            <person name="Kandassamy Y."/>
            <person name="Chantal I."/>
            <person name="Bensaid A."/>
            <person name="Coissac E."/>
            <person name="Vachiery N."/>
            <person name="Demaille J."/>
            <person name="Martinez D."/>
        </authorList>
    </citation>
    <scope>NUCLEOTIDE SEQUENCE [LARGE SCALE GENOMIC DNA]</scope>
    <source>
        <strain>Gardel</strain>
    </source>
</reference>
<keyword id="KW-0418">Kinase</keyword>
<keyword id="KW-0547">Nucleotide-binding</keyword>
<keyword id="KW-0723">Serine/threonine-protein kinase</keyword>
<keyword id="KW-0808">Transferase</keyword>
<evidence type="ECO:0000255" key="1">
    <source>
        <dbReference type="HAMAP-Rule" id="MF_00921"/>
    </source>
</evidence>
<evidence type="ECO:0000305" key="2"/>
<dbReference type="EC" id="2.7.11.32" evidence="1"/>
<dbReference type="EC" id="2.7.4.27" evidence="1"/>
<dbReference type="EMBL" id="CR925677">
    <property type="protein sequence ID" value="CAI27654.1"/>
    <property type="status" value="ALT_INIT"/>
    <property type="molecule type" value="Genomic_DNA"/>
</dbReference>
<dbReference type="RefSeq" id="WP_044156925.1">
    <property type="nucleotide sequence ID" value="NC_006831.1"/>
</dbReference>
<dbReference type="SMR" id="Q5FFG2"/>
<dbReference type="KEGG" id="erg:ERGA_CDS_02020"/>
<dbReference type="HOGENOM" id="CLU_046206_2_0_5"/>
<dbReference type="OrthoDB" id="9782201at2"/>
<dbReference type="Proteomes" id="UP000000533">
    <property type="component" value="Chromosome"/>
</dbReference>
<dbReference type="GO" id="GO:0043531">
    <property type="term" value="F:ADP binding"/>
    <property type="evidence" value="ECO:0007669"/>
    <property type="project" value="UniProtKB-UniRule"/>
</dbReference>
<dbReference type="GO" id="GO:0005524">
    <property type="term" value="F:ATP binding"/>
    <property type="evidence" value="ECO:0007669"/>
    <property type="project" value="InterPro"/>
</dbReference>
<dbReference type="GO" id="GO:0016776">
    <property type="term" value="F:phosphotransferase activity, phosphate group as acceptor"/>
    <property type="evidence" value="ECO:0007669"/>
    <property type="project" value="UniProtKB-UniRule"/>
</dbReference>
<dbReference type="GO" id="GO:0004674">
    <property type="term" value="F:protein serine/threonine kinase activity"/>
    <property type="evidence" value="ECO:0007669"/>
    <property type="project" value="UniProtKB-UniRule"/>
</dbReference>
<dbReference type="HAMAP" id="MF_00921">
    <property type="entry name" value="PDRP"/>
    <property type="match status" value="1"/>
</dbReference>
<dbReference type="InterPro" id="IPR005177">
    <property type="entry name" value="Kinase-pyrophosphorylase"/>
</dbReference>
<dbReference type="InterPro" id="IPR026565">
    <property type="entry name" value="PPDK_reg"/>
</dbReference>
<dbReference type="NCBIfam" id="NF003742">
    <property type="entry name" value="PRK05339.1"/>
    <property type="match status" value="1"/>
</dbReference>
<dbReference type="PANTHER" id="PTHR31756">
    <property type="entry name" value="PYRUVATE, PHOSPHATE DIKINASE REGULATORY PROTEIN 1, CHLOROPLASTIC"/>
    <property type="match status" value="1"/>
</dbReference>
<dbReference type="PANTHER" id="PTHR31756:SF3">
    <property type="entry name" value="PYRUVATE, PHOSPHATE DIKINASE REGULATORY PROTEIN 1, CHLOROPLASTIC"/>
    <property type="match status" value="1"/>
</dbReference>
<dbReference type="Pfam" id="PF03618">
    <property type="entry name" value="Kinase-PPPase"/>
    <property type="match status" value="1"/>
</dbReference>
<accession>Q5FFG2</accession>